<gene>
    <name evidence="1" type="primary">nhaA1</name>
    <name type="ordered locus">Dgeo_1563</name>
</gene>
<accession>Q1IY26</accession>
<dbReference type="EMBL" id="CP000359">
    <property type="protein sequence ID" value="ABF45858.1"/>
    <property type="molecule type" value="Genomic_DNA"/>
</dbReference>
<dbReference type="SMR" id="Q1IY26"/>
<dbReference type="STRING" id="319795.Dgeo_1563"/>
<dbReference type="KEGG" id="dge:Dgeo_1563"/>
<dbReference type="eggNOG" id="COG3004">
    <property type="taxonomic scope" value="Bacteria"/>
</dbReference>
<dbReference type="HOGENOM" id="CLU_015803_1_2_0"/>
<dbReference type="Proteomes" id="UP000002431">
    <property type="component" value="Chromosome"/>
</dbReference>
<dbReference type="GO" id="GO:0005886">
    <property type="term" value="C:plasma membrane"/>
    <property type="evidence" value="ECO:0007669"/>
    <property type="project" value="UniProtKB-SubCell"/>
</dbReference>
<dbReference type="GO" id="GO:0015385">
    <property type="term" value="F:sodium:proton antiporter activity"/>
    <property type="evidence" value="ECO:0007669"/>
    <property type="project" value="TreeGrafter"/>
</dbReference>
<dbReference type="GO" id="GO:0006885">
    <property type="term" value="P:regulation of pH"/>
    <property type="evidence" value="ECO:0007669"/>
    <property type="project" value="InterPro"/>
</dbReference>
<dbReference type="Gene3D" id="1.20.1530.10">
    <property type="entry name" value="Na+/H+ antiporter like domain"/>
    <property type="match status" value="1"/>
</dbReference>
<dbReference type="HAMAP" id="MF_01844">
    <property type="entry name" value="NhaA"/>
    <property type="match status" value="1"/>
</dbReference>
<dbReference type="InterPro" id="IPR023171">
    <property type="entry name" value="Na/H_antiporter_dom_sf"/>
</dbReference>
<dbReference type="InterPro" id="IPR004670">
    <property type="entry name" value="NhaA"/>
</dbReference>
<dbReference type="NCBIfam" id="TIGR00773">
    <property type="entry name" value="NhaA"/>
    <property type="match status" value="1"/>
</dbReference>
<dbReference type="NCBIfam" id="NF007111">
    <property type="entry name" value="PRK09560.1"/>
    <property type="match status" value="1"/>
</dbReference>
<dbReference type="NCBIfam" id="NF007112">
    <property type="entry name" value="PRK09561.1"/>
    <property type="match status" value="1"/>
</dbReference>
<dbReference type="PANTHER" id="PTHR30341:SF0">
    <property type="entry name" value="NA(+)_H(+) ANTIPORTER NHAA"/>
    <property type="match status" value="1"/>
</dbReference>
<dbReference type="PANTHER" id="PTHR30341">
    <property type="entry name" value="SODIUM ION/PROTON ANTIPORTER NHAA-RELATED"/>
    <property type="match status" value="1"/>
</dbReference>
<dbReference type="Pfam" id="PF06965">
    <property type="entry name" value="Na_H_antiport_1"/>
    <property type="match status" value="1"/>
</dbReference>
<organism>
    <name type="scientific">Deinococcus geothermalis (strain DSM 11300 / CIP 105573 / AG-3a)</name>
    <dbReference type="NCBI Taxonomy" id="319795"/>
    <lineage>
        <taxon>Bacteria</taxon>
        <taxon>Thermotogati</taxon>
        <taxon>Deinococcota</taxon>
        <taxon>Deinococci</taxon>
        <taxon>Deinococcales</taxon>
        <taxon>Deinococcaceae</taxon>
        <taxon>Deinococcus</taxon>
    </lineage>
</organism>
<comment type="function">
    <text evidence="1">Na(+)/H(+) antiporter that extrudes sodium in exchange for external protons.</text>
</comment>
<comment type="catalytic activity">
    <reaction evidence="1">
        <text>Na(+)(in) + 2 H(+)(out) = Na(+)(out) + 2 H(+)(in)</text>
        <dbReference type="Rhea" id="RHEA:29251"/>
        <dbReference type="ChEBI" id="CHEBI:15378"/>
        <dbReference type="ChEBI" id="CHEBI:29101"/>
    </reaction>
    <physiologicalReaction direction="left-to-right" evidence="1">
        <dbReference type="Rhea" id="RHEA:29252"/>
    </physiologicalReaction>
</comment>
<comment type="subcellular location">
    <subcellularLocation>
        <location evidence="1">Cell membrane</location>
        <topology evidence="1">Multi-pass membrane protein</topology>
    </subcellularLocation>
</comment>
<comment type="similarity">
    <text evidence="1">Belongs to the NhaA Na(+)/H(+) (TC 2.A.33) antiporter family.</text>
</comment>
<feature type="chain" id="PRO_0000334273" description="Na(+)/H(+) antiporter NhaA 1">
    <location>
        <begin position="1"/>
        <end position="421"/>
    </location>
</feature>
<feature type="transmembrane region" description="Helical" evidence="1">
    <location>
        <begin position="48"/>
        <end position="68"/>
    </location>
</feature>
<feature type="transmembrane region" description="Helical" evidence="1">
    <location>
        <begin position="93"/>
        <end position="113"/>
    </location>
</feature>
<feature type="transmembrane region" description="Helical" evidence="1">
    <location>
        <begin position="129"/>
        <end position="149"/>
    </location>
</feature>
<feature type="transmembrane region" description="Helical" evidence="1">
    <location>
        <begin position="157"/>
        <end position="177"/>
    </location>
</feature>
<feature type="transmembrane region" description="Helical" evidence="1">
    <location>
        <begin position="187"/>
        <end position="207"/>
    </location>
</feature>
<feature type="transmembrane region" description="Helical" evidence="1">
    <location>
        <begin position="215"/>
        <end position="235"/>
    </location>
</feature>
<feature type="transmembrane region" description="Helical" evidence="1">
    <location>
        <begin position="253"/>
        <end position="273"/>
    </location>
</feature>
<feature type="transmembrane region" description="Helical" evidence="1">
    <location>
        <begin position="299"/>
        <end position="319"/>
    </location>
</feature>
<feature type="transmembrane region" description="Helical" evidence="1">
    <location>
        <begin position="326"/>
        <end position="346"/>
    </location>
</feature>
<feature type="transmembrane region" description="Helical" evidence="1">
    <location>
        <begin position="364"/>
        <end position="384"/>
    </location>
</feature>
<feature type="transmembrane region" description="Helical" evidence="1">
    <location>
        <begin position="392"/>
        <end position="412"/>
    </location>
</feature>
<evidence type="ECO:0000255" key="1">
    <source>
        <dbReference type="HAMAP-Rule" id="MF_01844"/>
    </source>
</evidence>
<protein>
    <recommendedName>
        <fullName evidence="1">Na(+)/H(+) antiporter NhaA 1</fullName>
    </recommendedName>
    <alternativeName>
        <fullName evidence="1">Sodium/proton antiporter NhaA 1</fullName>
    </alternativeName>
</protein>
<keyword id="KW-0050">Antiport</keyword>
<keyword id="KW-1003">Cell membrane</keyword>
<keyword id="KW-0406">Ion transport</keyword>
<keyword id="KW-0472">Membrane</keyword>
<keyword id="KW-0915">Sodium</keyword>
<keyword id="KW-0739">Sodium transport</keyword>
<keyword id="KW-0812">Transmembrane</keyword>
<keyword id="KW-1133">Transmembrane helix</keyword>
<keyword id="KW-0813">Transport</keyword>
<name>NHAA1_DEIGD</name>
<reference key="1">
    <citation type="submission" date="2006-04" db="EMBL/GenBank/DDBJ databases">
        <title>Complete sequence of chromosome of Deinococcus geothermalis DSM 11300.</title>
        <authorList>
            <person name="Copeland A."/>
            <person name="Lucas S."/>
            <person name="Lapidus A."/>
            <person name="Barry K."/>
            <person name="Detter J.C."/>
            <person name="Glavina del Rio T."/>
            <person name="Hammon N."/>
            <person name="Israni S."/>
            <person name="Dalin E."/>
            <person name="Tice H."/>
            <person name="Pitluck S."/>
            <person name="Brettin T."/>
            <person name="Bruce D."/>
            <person name="Han C."/>
            <person name="Tapia R."/>
            <person name="Saunders E."/>
            <person name="Gilna P."/>
            <person name="Schmutz J."/>
            <person name="Larimer F."/>
            <person name="Land M."/>
            <person name="Hauser L."/>
            <person name="Kyrpides N."/>
            <person name="Kim E."/>
            <person name="Daly M.J."/>
            <person name="Fredrickson J.K."/>
            <person name="Makarova K.S."/>
            <person name="Gaidamakova E.K."/>
            <person name="Zhai M."/>
            <person name="Richardson P."/>
        </authorList>
    </citation>
    <scope>NUCLEOTIDE SEQUENCE [LARGE SCALE GENOMIC DNA]</scope>
    <source>
        <strain>DSM 11300 / CIP 105573 / AG-3a</strain>
    </source>
</reference>
<sequence length="421" mass="44042">MTIRRPGGACLFGLLLAVSPTPFPRRTTLTPIRTLLTPFGEFFKGQASSGLVLILAAVLAFAWANSPWRESYFTLRELPLTLSLGSWTLSHGLYWWVNDLLMALFFLLVGLEIKRELRVGELRHPRQASLALFAALGGMLLPAGLYTLVNAGGPGAAGWGVPMATDIAFALGVLALLGDRVSPGLKVLLAALAILDDLGAVLVIALFYTSGLNLLALGLMGAVWALGLGLNAAGVRHLGPYAVLGAALWLTTLASGLHPTVAGVLLALTIPLGRRAEQEDAEPSPLHRLEHGLHPWSAFLILPLFALFNAGVSVAGGSLDRVTLGVVLGLIIGKPLGVVAFAWLAVQLRAASLPEDVTWPGMLGLGLLAGIGFTMALFIGGLAFPEGALLNAAKLGILTASVLAALAAITVLTRAFPRQPR</sequence>
<proteinExistence type="inferred from homology"/>